<feature type="chain" id="PRO_1000074437" description="Holliday junction branch migration complex subunit RuvA">
    <location>
        <begin position="1"/>
        <end position="205"/>
    </location>
</feature>
<feature type="region of interest" description="Domain I" evidence="1">
    <location>
        <begin position="1"/>
        <end position="64"/>
    </location>
</feature>
<feature type="region of interest" description="Domain II" evidence="1">
    <location>
        <begin position="65"/>
        <end position="143"/>
    </location>
</feature>
<feature type="region of interest" description="Flexible linker" evidence="1">
    <location>
        <begin position="144"/>
        <end position="156"/>
    </location>
</feature>
<feature type="region of interest" description="Domain III" evidence="1">
    <location>
        <begin position="157"/>
        <end position="205"/>
    </location>
</feature>
<sequence>MIGRLRGVLVEKQAPEILIDVNGVGYELQMPLTSFYELPEVNHETMVYTHFVVREDAQLLYGFITKQERALFRLLIKTNGVGPKLALTILSGMTAGEFVGCVERDDIVTLVKLPGVGKKTAERLLVEMRDKLKSLMEASAGSEREFVLQSNYSPAPTVNSAEEDAISALISLGYKPPQASKSVSAAYKEGMDSETLIKAALKSML</sequence>
<keyword id="KW-0963">Cytoplasm</keyword>
<keyword id="KW-0227">DNA damage</keyword>
<keyword id="KW-0233">DNA recombination</keyword>
<keyword id="KW-0234">DNA repair</keyword>
<keyword id="KW-0238">DNA-binding</keyword>
<proteinExistence type="inferred from homology"/>
<dbReference type="EMBL" id="CP000891">
    <property type="protein sequence ID" value="ABX49588.1"/>
    <property type="molecule type" value="Genomic_DNA"/>
</dbReference>
<dbReference type="RefSeq" id="WP_006081742.1">
    <property type="nucleotide sequence ID" value="NC_009997.1"/>
</dbReference>
<dbReference type="SMR" id="A9L3H8"/>
<dbReference type="GeneID" id="11772537"/>
<dbReference type="KEGG" id="sbn:Sbal195_2420"/>
<dbReference type="HOGENOM" id="CLU_087936_0_0_6"/>
<dbReference type="Proteomes" id="UP000000770">
    <property type="component" value="Chromosome"/>
</dbReference>
<dbReference type="GO" id="GO:0005737">
    <property type="term" value="C:cytoplasm"/>
    <property type="evidence" value="ECO:0007669"/>
    <property type="project" value="UniProtKB-SubCell"/>
</dbReference>
<dbReference type="GO" id="GO:0009379">
    <property type="term" value="C:Holliday junction helicase complex"/>
    <property type="evidence" value="ECO:0007669"/>
    <property type="project" value="InterPro"/>
</dbReference>
<dbReference type="GO" id="GO:0048476">
    <property type="term" value="C:Holliday junction resolvase complex"/>
    <property type="evidence" value="ECO:0007669"/>
    <property type="project" value="UniProtKB-UniRule"/>
</dbReference>
<dbReference type="GO" id="GO:0005524">
    <property type="term" value="F:ATP binding"/>
    <property type="evidence" value="ECO:0007669"/>
    <property type="project" value="InterPro"/>
</dbReference>
<dbReference type="GO" id="GO:0000400">
    <property type="term" value="F:four-way junction DNA binding"/>
    <property type="evidence" value="ECO:0007669"/>
    <property type="project" value="UniProtKB-UniRule"/>
</dbReference>
<dbReference type="GO" id="GO:0009378">
    <property type="term" value="F:four-way junction helicase activity"/>
    <property type="evidence" value="ECO:0007669"/>
    <property type="project" value="InterPro"/>
</dbReference>
<dbReference type="GO" id="GO:0006310">
    <property type="term" value="P:DNA recombination"/>
    <property type="evidence" value="ECO:0007669"/>
    <property type="project" value="UniProtKB-UniRule"/>
</dbReference>
<dbReference type="GO" id="GO:0006281">
    <property type="term" value="P:DNA repair"/>
    <property type="evidence" value="ECO:0007669"/>
    <property type="project" value="UniProtKB-UniRule"/>
</dbReference>
<dbReference type="CDD" id="cd14332">
    <property type="entry name" value="UBA_RuvA_C"/>
    <property type="match status" value="1"/>
</dbReference>
<dbReference type="Gene3D" id="1.10.150.20">
    <property type="entry name" value="5' to 3' exonuclease, C-terminal subdomain"/>
    <property type="match status" value="1"/>
</dbReference>
<dbReference type="Gene3D" id="1.10.8.10">
    <property type="entry name" value="DNA helicase RuvA subunit, C-terminal domain"/>
    <property type="match status" value="1"/>
</dbReference>
<dbReference type="Gene3D" id="2.40.50.140">
    <property type="entry name" value="Nucleic acid-binding proteins"/>
    <property type="match status" value="1"/>
</dbReference>
<dbReference type="HAMAP" id="MF_00031">
    <property type="entry name" value="DNA_HJ_migration_RuvA"/>
    <property type="match status" value="1"/>
</dbReference>
<dbReference type="InterPro" id="IPR013849">
    <property type="entry name" value="DNA_helicase_Holl-junc_RuvA_I"/>
</dbReference>
<dbReference type="InterPro" id="IPR003583">
    <property type="entry name" value="Hlx-hairpin-Hlx_DNA-bd_motif"/>
</dbReference>
<dbReference type="InterPro" id="IPR012340">
    <property type="entry name" value="NA-bd_OB-fold"/>
</dbReference>
<dbReference type="InterPro" id="IPR000085">
    <property type="entry name" value="RuvA"/>
</dbReference>
<dbReference type="InterPro" id="IPR010994">
    <property type="entry name" value="RuvA_2-like"/>
</dbReference>
<dbReference type="InterPro" id="IPR011114">
    <property type="entry name" value="RuvA_C"/>
</dbReference>
<dbReference type="InterPro" id="IPR036267">
    <property type="entry name" value="RuvA_C_sf"/>
</dbReference>
<dbReference type="NCBIfam" id="TIGR00084">
    <property type="entry name" value="ruvA"/>
    <property type="match status" value="1"/>
</dbReference>
<dbReference type="Pfam" id="PF14520">
    <property type="entry name" value="HHH_5"/>
    <property type="match status" value="1"/>
</dbReference>
<dbReference type="Pfam" id="PF07499">
    <property type="entry name" value="RuvA_C"/>
    <property type="match status" value="1"/>
</dbReference>
<dbReference type="Pfam" id="PF01330">
    <property type="entry name" value="RuvA_N"/>
    <property type="match status" value="1"/>
</dbReference>
<dbReference type="SMART" id="SM00278">
    <property type="entry name" value="HhH1"/>
    <property type="match status" value="2"/>
</dbReference>
<dbReference type="SUPFAM" id="SSF46929">
    <property type="entry name" value="DNA helicase RuvA subunit, C-terminal domain"/>
    <property type="match status" value="1"/>
</dbReference>
<dbReference type="SUPFAM" id="SSF50249">
    <property type="entry name" value="Nucleic acid-binding proteins"/>
    <property type="match status" value="1"/>
</dbReference>
<dbReference type="SUPFAM" id="SSF47781">
    <property type="entry name" value="RuvA domain 2-like"/>
    <property type="match status" value="1"/>
</dbReference>
<organism>
    <name type="scientific">Shewanella baltica (strain OS195)</name>
    <dbReference type="NCBI Taxonomy" id="399599"/>
    <lineage>
        <taxon>Bacteria</taxon>
        <taxon>Pseudomonadati</taxon>
        <taxon>Pseudomonadota</taxon>
        <taxon>Gammaproteobacteria</taxon>
        <taxon>Alteromonadales</taxon>
        <taxon>Shewanellaceae</taxon>
        <taxon>Shewanella</taxon>
    </lineage>
</organism>
<name>RUVA_SHEB9</name>
<accession>A9L3H8</accession>
<comment type="function">
    <text evidence="1">The RuvA-RuvB-RuvC complex processes Holliday junction (HJ) DNA during genetic recombination and DNA repair, while the RuvA-RuvB complex plays an important role in the rescue of blocked DNA replication forks via replication fork reversal (RFR). RuvA specifically binds to HJ cruciform DNA, conferring on it an open structure. The RuvB hexamer acts as an ATP-dependent pump, pulling dsDNA into and through the RuvAB complex. HJ branch migration allows RuvC to scan DNA until it finds its consensus sequence, where it cleaves and resolves the cruciform DNA.</text>
</comment>
<comment type="subunit">
    <text evidence="1">Homotetramer. Forms an RuvA(8)-RuvB(12)-Holliday junction (HJ) complex. HJ DNA is sandwiched between 2 RuvA tetramers; dsDNA enters through RuvA and exits via RuvB. An RuvB hexamer assembles on each DNA strand where it exits the tetramer. Each RuvB hexamer is contacted by two RuvA subunits (via domain III) on 2 adjacent RuvB subunits; this complex drives branch migration. In the full resolvosome a probable DNA-RuvA(4)-RuvB(12)-RuvC(2) complex forms which resolves the HJ.</text>
</comment>
<comment type="subcellular location">
    <subcellularLocation>
        <location evidence="1">Cytoplasm</location>
    </subcellularLocation>
</comment>
<comment type="domain">
    <text evidence="1">Has three domains with a flexible linker between the domains II and III and assumes an 'L' shape. Domain III is highly mobile and contacts RuvB.</text>
</comment>
<comment type="similarity">
    <text evidence="1">Belongs to the RuvA family.</text>
</comment>
<evidence type="ECO:0000255" key="1">
    <source>
        <dbReference type="HAMAP-Rule" id="MF_00031"/>
    </source>
</evidence>
<protein>
    <recommendedName>
        <fullName evidence="1">Holliday junction branch migration complex subunit RuvA</fullName>
    </recommendedName>
</protein>
<reference key="1">
    <citation type="submission" date="2007-11" db="EMBL/GenBank/DDBJ databases">
        <title>Complete sequence of chromosome of Shewanella baltica OS195.</title>
        <authorList>
            <consortium name="US DOE Joint Genome Institute"/>
            <person name="Copeland A."/>
            <person name="Lucas S."/>
            <person name="Lapidus A."/>
            <person name="Barry K."/>
            <person name="Glavina del Rio T."/>
            <person name="Dalin E."/>
            <person name="Tice H."/>
            <person name="Pitluck S."/>
            <person name="Chain P."/>
            <person name="Malfatti S."/>
            <person name="Shin M."/>
            <person name="Vergez L."/>
            <person name="Schmutz J."/>
            <person name="Larimer F."/>
            <person name="Land M."/>
            <person name="Hauser L."/>
            <person name="Kyrpides N."/>
            <person name="Kim E."/>
            <person name="Brettar I."/>
            <person name="Rodrigues J."/>
            <person name="Konstantinidis K."/>
            <person name="Klappenbach J."/>
            <person name="Hofle M."/>
            <person name="Tiedje J."/>
            <person name="Richardson P."/>
        </authorList>
    </citation>
    <scope>NUCLEOTIDE SEQUENCE [LARGE SCALE GENOMIC DNA]</scope>
    <source>
        <strain>OS195</strain>
    </source>
</reference>
<gene>
    <name evidence="1" type="primary">ruvA</name>
    <name type="ordered locus">Sbal195_2420</name>
</gene>